<protein>
    <recommendedName>
        <fullName>Mitochondrial thiamine pyrophosphate carrier</fullName>
    </recommendedName>
    <alternativeName>
        <fullName>Solute carrier family 25 member 19</fullName>
    </alternativeName>
</protein>
<reference key="1">
    <citation type="journal article" date="2005" name="Science">
        <title>The transcriptional landscape of the mammalian genome.</title>
        <authorList>
            <person name="Carninci P."/>
            <person name="Kasukawa T."/>
            <person name="Katayama S."/>
            <person name="Gough J."/>
            <person name="Frith M.C."/>
            <person name="Maeda N."/>
            <person name="Oyama R."/>
            <person name="Ravasi T."/>
            <person name="Lenhard B."/>
            <person name="Wells C."/>
            <person name="Kodzius R."/>
            <person name="Shimokawa K."/>
            <person name="Bajic V.B."/>
            <person name="Brenner S.E."/>
            <person name="Batalov S."/>
            <person name="Forrest A.R."/>
            <person name="Zavolan M."/>
            <person name="Davis M.J."/>
            <person name="Wilming L.G."/>
            <person name="Aidinis V."/>
            <person name="Allen J.E."/>
            <person name="Ambesi-Impiombato A."/>
            <person name="Apweiler R."/>
            <person name="Aturaliya R.N."/>
            <person name="Bailey T.L."/>
            <person name="Bansal M."/>
            <person name="Baxter L."/>
            <person name="Beisel K.W."/>
            <person name="Bersano T."/>
            <person name="Bono H."/>
            <person name="Chalk A.M."/>
            <person name="Chiu K.P."/>
            <person name="Choudhary V."/>
            <person name="Christoffels A."/>
            <person name="Clutterbuck D.R."/>
            <person name="Crowe M.L."/>
            <person name="Dalla E."/>
            <person name="Dalrymple B.P."/>
            <person name="de Bono B."/>
            <person name="Della Gatta G."/>
            <person name="di Bernardo D."/>
            <person name="Down T."/>
            <person name="Engstrom P."/>
            <person name="Fagiolini M."/>
            <person name="Faulkner G."/>
            <person name="Fletcher C.F."/>
            <person name="Fukushima T."/>
            <person name="Furuno M."/>
            <person name="Futaki S."/>
            <person name="Gariboldi M."/>
            <person name="Georgii-Hemming P."/>
            <person name="Gingeras T.R."/>
            <person name="Gojobori T."/>
            <person name="Green R.E."/>
            <person name="Gustincich S."/>
            <person name="Harbers M."/>
            <person name="Hayashi Y."/>
            <person name="Hensch T.K."/>
            <person name="Hirokawa N."/>
            <person name="Hill D."/>
            <person name="Huminiecki L."/>
            <person name="Iacono M."/>
            <person name="Ikeo K."/>
            <person name="Iwama A."/>
            <person name="Ishikawa T."/>
            <person name="Jakt M."/>
            <person name="Kanapin A."/>
            <person name="Katoh M."/>
            <person name="Kawasawa Y."/>
            <person name="Kelso J."/>
            <person name="Kitamura H."/>
            <person name="Kitano H."/>
            <person name="Kollias G."/>
            <person name="Krishnan S.P."/>
            <person name="Kruger A."/>
            <person name="Kummerfeld S.K."/>
            <person name="Kurochkin I.V."/>
            <person name="Lareau L.F."/>
            <person name="Lazarevic D."/>
            <person name="Lipovich L."/>
            <person name="Liu J."/>
            <person name="Liuni S."/>
            <person name="McWilliam S."/>
            <person name="Madan Babu M."/>
            <person name="Madera M."/>
            <person name="Marchionni L."/>
            <person name="Matsuda H."/>
            <person name="Matsuzawa S."/>
            <person name="Miki H."/>
            <person name="Mignone F."/>
            <person name="Miyake S."/>
            <person name="Morris K."/>
            <person name="Mottagui-Tabar S."/>
            <person name="Mulder N."/>
            <person name="Nakano N."/>
            <person name="Nakauchi H."/>
            <person name="Ng P."/>
            <person name="Nilsson R."/>
            <person name="Nishiguchi S."/>
            <person name="Nishikawa S."/>
            <person name="Nori F."/>
            <person name="Ohara O."/>
            <person name="Okazaki Y."/>
            <person name="Orlando V."/>
            <person name="Pang K.C."/>
            <person name="Pavan W.J."/>
            <person name="Pavesi G."/>
            <person name="Pesole G."/>
            <person name="Petrovsky N."/>
            <person name="Piazza S."/>
            <person name="Reed J."/>
            <person name="Reid J.F."/>
            <person name="Ring B.Z."/>
            <person name="Ringwald M."/>
            <person name="Rost B."/>
            <person name="Ruan Y."/>
            <person name="Salzberg S.L."/>
            <person name="Sandelin A."/>
            <person name="Schneider C."/>
            <person name="Schoenbach C."/>
            <person name="Sekiguchi K."/>
            <person name="Semple C.A."/>
            <person name="Seno S."/>
            <person name="Sessa L."/>
            <person name="Sheng Y."/>
            <person name="Shibata Y."/>
            <person name="Shimada H."/>
            <person name="Shimada K."/>
            <person name="Silva D."/>
            <person name="Sinclair B."/>
            <person name="Sperling S."/>
            <person name="Stupka E."/>
            <person name="Sugiura K."/>
            <person name="Sultana R."/>
            <person name="Takenaka Y."/>
            <person name="Taki K."/>
            <person name="Tammoja K."/>
            <person name="Tan S.L."/>
            <person name="Tang S."/>
            <person name="Taylor M.S."/>
            <person name="Tegner J."/>
            <person name="Teichmann S.A."/>
            <person name="Ueda H.R."/>
            <person name="van Nimwegen E."/>
            <person name="Verardo R."/>
            <person name="Wei C.L."/>
            <person name="Yagi K."/>
            <person name="Yamanishi H."/>
            <person name="Zabarovsky E."/>
            <person name="Zhu S."/>
            <person name="Zimmer A."/>
            <person name="Hide W."/>
            <person name="Bult C."/>
            <person name="Grimmond S.M."/>
            <person name="Teasdale R.D."/>
            <person name="Liu E.T."/>
            <person name="Brusic V."/>
            <person name="Quackenbush J."/>
            <person name="Wahlestedt C."/>
            <person name="Mattick J.S."/>
            <person name="Hume D.A."/>
            <person name="Kai C."/>
            <person name="Sasaki D."/>
            <person name="Tomaru Y."/>
            <person name="Fukuda S."/>
            <person name="Kanamori-Katayama M."/>
            <person name="Suzuki M."/>
            <person name="Aoki J."/>
            <person name="Arakawa T."/>
            <person name="Iida J."/>
            <person name="Imamura K."/>
            <person name="Itoh M."/>
            <person name="Kato T."/>
            <person name="Kawaji H."/>
            <person name="Kawagashira N."/>
            <person name="Kawashima T."/>
            <person name="Kojima M."/>
            <person name="Kondo S."/>
            <person name="Konno H."/>
            <person name="Nakano K."/>
            <person name="Ninomiya N."/>
            <person name="Nishio T."/>
            <person name="Okada M."/>
            <person name="Plessy C."/>
            <person name="Shibata K."/>
            <person name="Shiraki T."/>
            <person name="Suzuki S."/>
            <person name="Tagami M."/>
            <person name="Waki K."/>
            <person name="Watahiki A."/>
            <person name="Okamura-Oho Y."/>
            <person name="Suzuki H."/>
            <person name="Kawai J."/>
            <person name="Hayashizaki Y."/>
        </authorList>
    </citation>
    <scope>NUCLEOTIDE SEQUENCE [LARGE SCALE MRNA]</scope>
    <source>
        <strain>C57BL/6J</strain>
        <strain>NOD</strain>
        <tissue>Spleen</tissue>
        <tissue>Testis</tissue>
    </source>
</reference>
<reference key="2">
    <citation type="journal article" date="2009" name="PLoS Biol.">
        <title>Lineage-specific biology revealed by a finished genome assembly of the mouse.</title>
        <authorList>
            <person name="Church D.M."/>
            <person name="Goodstadt L."/>
            <person name="Hillier L.W."/>
            <person name="Zody M.C."/>
            <person name="Goldstein S."/>
            <person name="She X."/>
            <person name="Bult C.J."/>
            <person name="Agarwala R."/>
            <person name="Cherry J.L."/>
            <person name="DiCuccio M."/>
            <person name="Hlavina W."/>
            <person name="Kapustin Y."/>
            <person name="Meric P."/>
            <person name="Maglott D."/>
            <person name="Birtle Z."/>
            <person name="Marques A.C."/>
            <person name="Graves T."/>
            <person name="Zhou S."/>
            <person name="Teague B."/>
            <person name="Potamousis K."/>
            <person name="Churas C."/>
            <person name="Place M."/>
            <person name="Herschleb J."/>
            <person name="Runnheim R."/>
            <person name="Forrest D."/>
            <person name="Amos-Landgraf J."/>
            <person name="Schwartz D.C."/>
            <person name="Cheng Z."/>
            <person name="Lindblad-Toh K."/>
            <person name="Eichler E.E."/>
            <person name="Ponting C.P."/>
        </authorList>
    </citation>
    <scope>NUCLEOTIDE SEQUENCE [LARGE SCALE GENOMIC DNA]</scope>
    <source>
        <strain>C57BL/6J</strain>
    </source>
</reference>
<reference key="3">
    <citation type="journal article" date="2004" name="Genome Res.">
        <title>The status, quality, and expansion of the NIH full-length cDNA project: the Mammalian Gene Collection (MGC).</title>
        <authorList>
            <consortium name="The MGC Project Team"/>
        </authorList>
    </citation>
    <scope>NUCLEOTIDE SEQUENCE [LARGE SCALE MRNA]</scope>
</reference>
<reference key="4">
    <citation type="journal article" date="2010" name="Cell">
        <title>A tissue-specific atlas of mouse protein phosphorylation and expression.</title>
        <authorList>
            <person name="Huttlin E.L."/>
            <person name="Jedrychowski M.P."/>
            <person name="Elias J.E."/>
            <person name="Goswami T."/>
            <person name="Rad R."/>
            <person name="Beausoleil S.A."/>
            <person name="Villen J."/>
            <person name="Haas W."/>
            <person name="Sowa M.E."/>
            <person name="Gygi S.P."/>
        </authorList>
    </citation>
    <scope>IDENTIFICATION BY MASS SPECTROMETRY [LARGE SCALE ANALYSIS]</scope>
    <source>
        <tissue>Brain</tissue>
        <tissue>Brown adipose tissue</tissue>
        <tissue>Heart</tissue>
        <tissue>Kidney</tissue>
    </source>
</reference>
<reference key="5">
    <citation type="journal article" date="2006" name="Proc. Natl. Acad. Sci. U.S.A.">
        <title>Knockout of Slc25a19 causes mitochondrial thiamine pyrophosphate depletion, embryonic lethality, CNS malformations, and anemia.</title>
        <authorList>
            <person name="Lindhurst M.J."/>
            <person name="Fiermonte G."/>
            <person name="Song S."/>
            <person name="Struys E."/>
            <person name="De Leonardis F."/>
            <person name="Schwartzberg P.L."/>
            <person name="Chen A."/>
            <person name="Castegna A."/>
            <person name="Verhoeven N."/>
            <person name="Mathews C.K."/>
            <person name="Palmieri F."/>
            <person name="Biesecker L.G."/>
        </authorList>
    </citation>
    <scope>DISRUPTION PHENOTYPE</scope>
    <scope>FUNCTION</scope>
    <scope>MUTAGENESIS OF GLY-177</scope>
</reference>
<feature type="chain" id="PRO_0000090613" description="Mitochondrial thiamine pyrophosphate carrier">
    <location>
        <begin position="1"/>
        <end position="318"/>
    </location>
</feature>
<feature type="transmembrane region" description="Helical; Name=1" evidence="3">
    <location>
        <begin position="19"/>
        <end position="39"/>
    </location>
</feature>
<feature type="transmembrane region" description="Helical; Name=2" evidence="3">
    <location>
        <begin position="87"/>
        <end position="107"/>
    </location>
</feature>
<feature type="transmembrane region" description="Helical; Name=3" evidence="3">
    <location>
        <begin position="122"/>
        <end position="142"/>
    </location>
</feature>
<feature type="transmembrane region" description="Helical; Name=4" evidence="3">
    <location>
        <begin position="173"/>
        <end position="193"/>
    </location>
</feature>
<feature type="transmembrane region" description="Helical; Name=5" evidence="3">
    <location>
        <begin position="220"/>
        <end position="240"/>
    </location>
</feature>
<feature type="transmembrane region" description="Helical; Name=6" evidence="3">
    <location>
        <begin position="293"/>
        <end position="313"/>
    </location>
</feature>
<feature type="repeat" description="Solcar 1" evidence="4">
    <location>
        <begin position="13"/>
        <end position="106"/>
    </location>
</feature>
<feature type="repeat" description="Solcar 2" evidence="4">
    <location>
        <begin position="116"/>
        <end position="202"/>
    </location>
</feature>
<feature type="repeat" description="Solcar 3" evidence="4">
    <location>
        <begin position="214"/>
        <end position="309"/>
    </location>
</feature>
<feature type="short sequence motif" description="Substrate recognition" evidence="1">
    <location>
        <begin position="241"/>
        <end position="246"/>
    </location>
</feature>
<name>TPC_MOUSE</name>
<gene>
    <name type="primary">Slc25a19</name>
</gene>
<keyword id="KW-0050">Antiport</keyword>
<keyword id="KW-0472">Membrane</keyword>
<keyword id="KW-0496">Mitochondrion</keyword>
<keyword id="KW-1185">Reference proteome</keyword>
<keyword id="KW-0677">Repeat</keyword>
<keyword id="KW-0812">Transmembrane</keyword>
<keyword id="KW-1133">Transmembrane helix</keyword>
<keyword id="KW-0813">Transport</keyword>
<proteinExistence type="evidence at protein level"/>
<sequence>MVGYDAKADVRSNSKLEVAVAGSVSGFVTRALISPLDVIKIRFQLQIERLCPSDPNAKYHGIFQAAKQILQEEGPRAFWKGHVPAQILSIGYGAVQFLAFEELTELLYQANLYQTHQFSAHFVCGGLSAGTATLTVHPVDVLRTRLAAQGEPKIYNNLREAIRTMYKTEGPFVFYKGLTPTVIAIFPYAGLQFSCYRSLKRAYDWLIPPDGKQTGNLKNLLCGCGSGVISKTFTYPLDLIKKRLQVGGFEHARSAFGQVRSYRGLLDLTQQVLQEEGTRGFFKGLSPSLMKAALSTGFMFFWYELFCNLFHCIRREDR</sequence>
<comment type="function">
    <text evidence="2">Mitochondrial transporter mediating uptake of thiamine diphosphate into mitochondria. It is not clear if the antiporter activity is affected by the membrane potential or by the proton electrochemical gradient.</text>
</comment>
<comment type="catalytic activity">
    <reaction evidence="2">
        <text>thiamine phosphate(out) + thiamine diphosphate(in) = thiamine phosphate(in) + thiamine diphosphate(out)</text>
        <dbReference type="Rhea" id="RHEA:73383"/>
        <dbReference type="ChEBI" id="CHEBI:37575"/>
        <dbReference type="ChEBI" id="CHEBI:58937"/>
    </reaction>
</comment>
<comment type="subcellular location">
    <subcellularLocation>
        <location evidence="2">Mitochondrion membrane</location>
        <topology evidence="3">Multi-pass membrane protein</topology>
    </subcellularLocation>
</comment>
<comment type="disruption phenotype">
    <text evidence="5">Deficient mice are embryonically lethal, with death occurring on or before day 11 of the embryo development. Knockout of Slc25a19 causes mitochondrial thiamine pyrophosphate depletion, embryonic lethality, CNS malformations and anemia.</text>
</comment>
<comment type="similarity">
    <text evidence="6">Belongs to the mitochondrial carrier (TC 2.A.29) family.</text>
</comment>
<comment type="caution">
    <text evidence="2">Previously identified as the mitochondrial deoxyribonucleotide carrier. However other experiments later demonstrated that SLC25A19 is a thiamine diphosphate transporter and not a mitochondrial deoxyribonucleotide carrier.</text>
</comment>
<dbReference type="EMBL" id="AK005710">
    <property type="protein sequence ID" value="BAB24199.1"/>
    <property type="molecule type" value="mRNA"/>
</dbReference>
<dbReference type="EMBL" id="AK172622">
    <property type="protein sequence ID" value="BAE43100.1"/>
    <property type="molecule type" value="mRNA"/>
</dbReference>
<dbReference type="EMBL" id="AL645470">
    <property type="status" value="NOT_ANNOTATED_CDS"/>
    <property type="molecule type" value="Genomic_DNA"/>
</dbReference>
<dbReference type="EMBL" id="BC018167">
    <property type="protein sequence ID" value="AAH18167.1"/>
    <property type="molecule type" value="mRNA"/>
</dbReference>
<dbReference type="CCDS" id="CCDS25644.1"/>
<dbReference type="RefSeq" id="NP_001239313.1">
    <property type="nucleotide sequence ID" value="NM_001252384.1"/>
</dbReference>
<dbReference type="RefSeq" id="NP_001239324.1">
    <property type="nucleotide sequence ID" value="NM_001252395.1"/>
</dbReference>
<dbReference type="RefSeq" id="NP_080347.1">
    <property type="nucleotide sequence ID" value="NM_026071.3"/>
</dbReference>
<dbReference type="RefSeq" id="XP_006534042.1">
    <property type="nucleotide sequence ID" value="XM_006533979.4"/>
</dbReference>
<dbReference type="RefSeq" id="XP_017170203.1">
    <property type="nucleotide sequence ID" value="XM_017314714.2"/>
</dbReference>
<dbReference type="RefSeq" id="XP_036012795.1">
    <property type="nucleotide sequence ID" value="XM_036156902.1"/>
</dbReference>
<dbReference type="SMR" id="Q9DAM5"/>
<dbReference type="BioGRID" id="212072">
    <property type="interactions" value="1"/>
</dbReference>
<dbReference type="FunCoup" id="Q9DAM5">
    <property type="interactions" value="1260"/>
</dbReference>
<dbReference type="STRING" id="10090.ENSMUSP00000137534"/>
<dbReference type="PhosphoSitePlus" id="Q9DAM5"/>
<dbReference type="PaxDb" id="10090-ENSMUSP00000021089"/>
<dbReference type="ProteomicsDB" id="258828"/>
<dbReference type="Pumba" id="Q9DAM5"/>
<dbReference type="Antibodypedia" id="46024">
    <property type="antibodies" value="95 antibodies from 19 providers"/>
</dbReference>
<dbReference type="DNASU" id="67283"/>
<dbReference type="Ensembl" id="ENSMUST00000021089.11">
    <property type="protein sequence ID" value="ENSMUSP00000021089.5"/>
    <property type="gene ID" value="ENSMUSG00000020744.14"/>
</dbReference>
<dbReference type="Ensembl" id="ENSMUST00000178003.8">
    <property type="protein sequence ID" value="ENSMUSP00000137534.2"/>
    <property type="gene ID" value="ENSMUSG00000020744.14"/>
</dbReference>
<dbReference type="GeneID" id="67283"/>
<dbReference type="KEGG" id="mmu:67283"/>
<dbReference type="UCSC" id="uc007mig.2">
    <property type="organism name" value="mouse"/>
</dbReference>
<dbReference type="AGR" id="MGI:1914533"/>
<dbReference type="CTD" id="60386"/>
<dbReference type="MGI" id="MGI:1914533">
    <property type="gene designation" value="Slc25a19"/>
</dbReference>
<dbReference type="VEuPathDB" id="HostDB:ENSMUSG00000020744"/>
<dbReference type="eggNOG" id="KOG0752">
    <property type="taxonomic scope" value="Eukaryota"/>
</dbReference>
<dbReference type="GeneTree" id="ENSGT00550000074902"/>
<dbReference type="HOGENOM" id="CLU_015166_10_3_1"/>
<dbReference type="InParanoid" id="Q9DAM5"/>
<dbReference type="OMA" id="MYVCYGA"/>
<dbReference type="OrthoDB" id="18574at2759"/>
<dbReference type="PhylomeDB" id="Q9DAM5"/>
<dbReference type="TreeFam" id="TF313047"/>
<dbReference type="Reactome" id="R-MMU-196819">
    <property type="pathway name" value="Vitamin B1 (thiamin) metabolism"/>
</dbReference>
<dbReference type="BioGRID-ORCS" id="67283">
    <property type="hits" value="19 hits in 78 CRISPR screens"/>
</dbReference>
<dbReference type="ChiTaRS" id="Slc25a19">
    <property type="organism name" value="mouse"/>
</dbReference>
<dbReference type="PRO" id="PR:Q9DAM5"/>
<dbReference type="Proteomes" id="UP000000589">
    <property type="component" value="Chromosome 11"/>
</dbReference>
<dbReference type="RNAct" id="Q9DAM5">
    <property type="molecule type" value="protein"/>
</dbReference>
<dbReference type="Bgee" id="ENSMUSG00000020744">
    <property type="expression patterns" value="Expressed in retinal neural layer and 230 other cell types or tissues"/>
</dbReference>
<dbReference type="ExpressionAtlas" id="Q9DAM5">
    <property type="expression patterns" value="baseline and differential"/>
</dbReference>
<dbReference type="GO" id="GO:0005743">
    <property type="term" value="C:mitochondrial inner membrane"/>
    <property type="evidence" value="ECO:0000314"/>
    <property type="project" value="MGI"/>
</dbReference>
<dbReference type="GO" id="GO:0005739">
    <property type="term" value="C:mitochondrion"/>
    <property type="evidence" value="ECO:0007005"/>
    <property type="project" value="MGI"/>
</dbReference>
<dbReference type="GO" id="GO:0015297">
    <property type="term" value="F:antiporter activity"/>
    <property type="evidence" value="ECO:0007669"/>
    <property type="project" value="UniProtKB-KW"/>
</dbReference>
<dbReference type="GO" id="GO:0090422">
    <property type="term" value="F:thiamine pyrophosphate transmembrane transporter activity"/>
    <property type="evidence" value="ECO:0000314"/>
    <property type="project" value="MGI"/>
</dbReference>
<dbReference type="GO" id="GO:0009229">
    <property type="term" value="P:thiamine diphosphate biosynthetic process"/>
    <property type="evidence" value="ECO:0000314"/>
    <property type="project" value="MGI"/>
</dbReference>
<dbReference type="GO" id="GO:0030974">
    <property type="term" value="P:thiamine pyrophosphate transmembrane transport"/>
    <property type="evidence" value="ECO:0000250"/>
    <property type="project" value="UniProtKB"/>
</dbReference>
<dbReference type="FunFam" id="1.50.40.10:FF:000011">
    <property type="entry name" value="Mitochondrial thiamine pyrophosphate carrier 1"/>
    <property type="match status" value="1"/>
</dbReference>
<dbReference type="Gene3D" id="1.50.40.10">
    <property type="entry name" value="Mitochondrial carrier domain"/>
    <property type="match status" value="1"/>
</dbReference>
<dbReference type="InterPro" id="IPR002067">
    <property type="entry name" value="Mit_carrier"/>
</dbReference>
<dbReference type="InterPro" id="IPR018108">
    <property type="entry name" value="Mitochondrial_sb/sol_carrier"/>
</dbReference>
<dbReference type="InterPro" id="IPR023395">
    <property type="entry name" value="Mt_carrier_dom_sf"/>
</dbReference>
<dbReference type="PANTHER" id="PTHR24089">
    <property type="entry name" value="SOLUTE CARRIER FAMILY 25"/>
    <property type="match status" value="1"/>
</dbReference>
<dbReference type="Pfam" id="PF00153">
    <property type="entry name" value="Mito_carr"/>
    <property type="match status" value="3"/>
</dbReference>
<dbReference type="PRINTS" id="PR00926">
    <property type="entry name" value="MITOCARRIER"/>
</dbReference>
<dbReference type="SUPFAM" id="SSF103506">
    <property type="entry name" value="Mitochondrial carrier"/>
    <property type="match status" value="1"/>
</dbReference>
<dbReference type="PROSITE" id="PS50920">
    <property type="entry name" value="SOLCAR"/>
    <property type="match status" value="3"/>
</dbReference>
<accession>Q9DAM5</accession>
<accession>A2A9V6</accession>
<accession>Q3T9C4</accession>
<organism>
    <name type="scientific">Mus musculus</name>
    <name type="common">Mouse</name>
    <dbReference type="NCBI Taxonomy" id="10090"/>
    <lineage>
        <taxon>Eukaryota</taxon>
        <taxon>Metazoa</taxon>
        <taxon>Chordata</taxon>
        <taxon>Craniata</taxon>
        <taxon>Vertebrata</taxon>
        <taxon>Euteleostomi</taxon>
        <taxon>Mammalia</taxon>
        <taxon>Eutheria</taxon>
        <taxon>Euarchontoglires</taxon>
        <taxon>Glires</taxon>
        <taxon>Rodentia</taxon>
        <taxon>Myomorpha</taxon>
        <taxon>Muroidea</taxon>
        <taxon>Muridae</taxon>
        <taxon>Murinae</taxon>
        <taxon>Mus</taxon>
        <taxon>Mus</taxon>
    </lineage>
</organism>
<evidence type="ECO:0000250" key="1"/>
<evidence type="ECO:0000250" key="2">
    <source>
        <dbReference type="UniProtKB" id="Q9HC21"/>
    </source>
</evidence>
<evidence type="ECO:0000255" key="3"/>
<evidence type="ECO:0000255" key="4">
    <source>
        <dbReference type="PROSITE-ProRule" id="PRU00282"/>
    </source>
</evidence>
<evidence type="ECO:0000269" key="5">
    <source>
    </source>
</evidence>
<evidence type="ECO:0000305" key="6"/>